<name>AUSE_EMENI</name>
<dbReference type="EC" id="1.14.11.-" evidence="3 5"/>
<dbReference type="EMBL" id="BN001308">
    <property type="protein sequence ID" value="CBF87240.1"/>
    <property type="molecule type" value="Genomic_DNA"/>
</dbReference>
<dbReference type="EMBL" id="AACD01000172">
    <property type="protein sequence ID" value="EAA66313.1"/>
    <property type="molecule type" value="Genomic_DNA"/>
</dbReference>
<dbReference type="RefSeq" id="XP_682515.1">
    <property type="nucleotide sequence ID" value="XM_677423.1"/>
</dbReference>
<dbReference type="PDB" id="5YBL">
    <property type="method" value="X-ray"/>
    <property type="resolution" value="2.11 A"/>
    <property type="chains" value="A/B/C/D=6-298"/>
</dbReference>
<dbReference type="PDBsum" id="5YBL"/>
<dbReference type="SMR" id="Q5AR34"/>
<dbReference type="STRING" id="227321.Q5AR34"/>
<dbReference type="EnsemblFungi" id="CBF87240">
    <property type="protein sequence ID" value="CBF87240"/>
    <property type="gene ID" value="ANIA_09246"/>
</dbReference>
<dbReference type="KEGG" id="ani:ANIA_09246"/>
<dbReference type="VEuPathDB" id="FungiDB:AN9246"/>
<dbReference type="eggNOG" id="ENOG502S7ZW">
    <property type="taxonomic scope" value="Eukaryota"/>
</dbReference>
<dbReference type="HOGENOM" id="CLU_047725_1_0_1"/>
<dbReference type="InParanoid" id="Q5AR34"/>
<dbReference type="OMA" id="GYWMNTS"/>
<dbReference type="OrthoDB" id="445007at2759"/>
<dbReference type="UniPathway" id="UPA00213"/>
<dbReference type="Proteomes" id="UP000000560">
    <property type="component" value="Chromosome VIII"/>
</dbReference>
<dbReference type="GO" id="GO:0051213">
    <property type="term" value="F:dioxygenase activity"/>
    <property type="evidence" value="ECO:0007669"/>
    <property type="project" value="UniProtKB-KW"/>
</dbReference>
<dbReference type="GO" id="GO:0046872">
    <property type="term" value="F:metal ion binding"/>
    <property type="evidence" value="ECO:0007669"/>
    <property type="project" value="UniProtKB-KW"/>
</dbReference>
<dbReference type="GO" id="GO:1900560">
    <property type="term" value="P:austinol biosynthetic process"/>
    <property type="evidence" value="ECO:0000315"/>
    <property type="project" value="AspGD"/>
</dbReference>
<dbReference type="GO" id="GO:1900563">
    <property type="term" value="P:dehydroaustinol biosynthetic process"/>
    <property type="evidence" value="ECO:0000315"/>
    <property type="project" value="AspGD"/>
</dbReference>
<dbReference type="GO" id="GO:0016114">
    <property type="term" value="P:terpenoid biosynthetic process"/>
    <property type="evidence" value="ECO:0007669"/>
    <property type="project" value="UniProtKB-UniPathway"/>
</dbReference>
<dbReference type="FunFam" id="2.60.120.620:FF:000089">
    <property type="entry name" value="Multifunctional dioxygenase ausE"/>
    <property type="match status" value="1"/>
</dbReference>
<dbReference type="Gene3D" id="2.60.120.620">
    <property type="entry name" value="q2cbj1_9rhob like domain"/>
    <property type="match status" value="1"/>
</dbReference>
<dbReference type="InterPro" id="IPR008775">
    <property type="entry name" value="Phytyl_CoA_dOase-like"/>
</dbReference>
<dbReference type="PANTHER" id="PTHR20883:SF19">
    <property type="entry name" value="MULTIFUNCTIONAL DIOXYGENASE AUSE"/>
    <property type="match status" value="1"/>
</dbReference>
<dbReference type="PANTHER" id="PTHR20883">
    <property type="entry name" value="PHYTANOYL-COA DIOXYGENASE DOMAIN CONTAINING 1"/>
    <property type="match status" value="1"/>
</dbReference>
<dbReference type="Pfam" id="PF05721">
    <property type="entry name" value="PhyH"/>
    <property type="match status" value="1"/>
</dbReference>
<dbReference type="SUPFAM" id="SSF51197">
    <property type="entry name" value="Clavaminate synthase-like"/>
    <property type="match status" value="1"/>
</dbReference>
<feature type="chain" id="PRO_0000436486" description="Multifunctional dioxygenase ausE">
    <location>
        <begin position="1"/>
        <end position="298"/>
    </location>
</feature>
<feature type="binding site" evidence="5 10">
    <location>
        <position position="72"/>
    </location>
    <ligand>
        <name>substrate</name>
    </ligand>
</feature>
<feature type="binding site" evidence="5 10">
    <location>
        <position position="127"/>
    </location>
    <ligand>
        <name>substrate</name>
    </ligand>
</feature>
<feature type="binding site" evidence="5 10">
    <location>
        <position position="130"/>
    </location>
    <ligand>
        <name>Fe cation</name>
        <dbReference type="ChEBI" id="CHEBI:24875"/>
    </ligand>
</feature>
<feature type="binding site" evidence="5 10">
    <location>
        <position position="132"/>
    </location>
    <ligand>
        <name>Fe cation</name>
        <dbReference type="ChEBI" id="CHEBI:24875"/>
    </ligand>
</feature>
<feature type="binding site" evidence="5 10">
    <location>
        <position position="167"/>
    </location>
    <ligand>
        <name>substrate</name>
    </ligand>
</feature>
<feature type="binding site" evidence="5 10">
    <location>
        <position position="214"/>
    </location>
    <ligand>
        <name>Fe cation</name>
        <dbReference type="ChEBI" id="CHEBI:24875"/>
    </ligand>
</feature>
<feature type="binding site" evidence="5 10">
    <location>
        <position position="226"/>
    </location>
    <ligand>
        <name>substrate</name>
    </ligand>
</feature>
<feature type="site" description="Important for reaction specificity" evidence="5">
    <location>
        <position position="150"/>
    </location>
</feature>
<feature type="site" description="Important for reaction specificity" evidence="5">
    <location>
        <position position="232"/>
    </location>
</feature>
<feature type="mutagenesis site" description="No longer produces preaustinoid A3, but yields the B-ring-expanded berkeleydione as a single product; when associated with A-232." evidence="5">
    <original>L</original>
    <variation>V</variation>
    <location>
        <position position="150"/>
    </location>
</feature>
<feature type="mutagenesis site" description="Gains a prhA-type 'B-ring expansion' activity to produce berkeleydione, while retaining the 'spiro-lactone forming' activity to produce preaustinoid A3. No longer produces preaustinoid A3, but yields the B-ring-expanded berkeleydione as a single product; when associated with V-150." evidence="5">
    <original>S</original>
    <variation>A</variation>
    <location>
        <position position="232"/>
    </location>
</feature>
<feature type="strand" evidence="11">
    <location>
        <begin position="10"/>
        <end position="13"/>
    </location>
</feature>
<feature type="helix" evidence="11">
    <location>
        <begin position="18"/>
        <end position="28"/>
    </location>
</feature>
<feature type="strand" evidence="11">
    <location>
        <begin position="29"/>
        <end position="34"/>
    </location>
</feature>
<feature type="helix" evidence="11">
    <location>
        <begin position="39"/>
        <end position="48"/>
    </location>
</feature>
<feature type="helix" evidence="11">
    <location>
        <begin position="50"/>
        <end position="54"/>
    </location>
</feature>
<feature type="turn" evidence="11">
    <location>
        <begin position="66"/>
        <end position="69"/>
    </location>
</feature>
<feature type="strand" evidence="11">
    <location>
        <begin position="70"/>
        <end position="73"/>
    </location>
</feature>
<feature type="helix" evidence="11">
    <location>
        <begin position="76"/>
        <end position="79"/>
    </location>
</feature>
<feature type="helix" evidence="11">
    <location>
        <begin position="81"/>
        <end position="85"/>
    </location>
</feature>
<feature type="helix" evidence="11">
    <location>
        <begin position="91"/>
        <end position="101"/>
    </location>
</feature>
<feature type="strand" evidence="11">
    <location>
        <begin position="110"/>
        <end position="120"/>
    </location>
</feature>
<feature type="helix" evidence="11">
    <location>
        <begin position="132"/>
        <end position="135"/>
    </location>
</feature>
<feature type="helix" evidence="11">
    <location>
        <begin position="137"/>
        <end position="142"/>
    </location>
</feature>
<feature type="strand" evidence="11">
    <location>
        <begin position="150"/>
        <end position="158"/>
    </location>
</feature>
<feature type="helix" evidence="11">
    <location>
        <begin position="171"/>
        <end position="175"/>
    </location>
</feature>
<feature type="strand" evidence="11">
    <location>
        <begin position="205"/>
        <end position="209"/>
    </location>
</feature>
<feature type="strand" evidence="11">
    <location>
        <begin position="221"/>
        <end position="223"/>
    </location>
</feature>
<feature type="strand" evidence="11">
    <location>
        <begin position="226"/>
        <end position="235"/>
    </location>
</feature>
<feature type="helix" evidence="11">
    <location>
        <begin position="244"/>
        <end position="247"/>
    </location>
</feature>
<feature type="helix" evidence="11">
    <location>
        <begin position="250"/>
        <end position="253"/>
    </location>
</feature>
<feature type="helix" evidence="11">
    <location>
        <begin position="258"/>
        <end position="263"/>
    </location>
</feature>
<feature type="strand" evidence="11">
    <location>
        <begin position="280"/>
        <end position="283"/>
    </location>
</feature>
<feature type="helix" evidence="11">
    <location>
        <begin position="288"/>
        <end position="291"/>
    </location>
</feature>
<reference key="1">
    <citation type="journal article" date="2005" name="Nature">
        <title>Sequencing of Aspergillus nidulans and comparative analysis with A. fumigatus and A. oryzae.</title>
        <authorList>
            <person name="Galagan J.E."/>
            <person name="Calvo S.E."/>
            <person name="Cuomo C."/>
            <person name="Ma L.-J."/>
            <person name="Wortman J.R."/>
            <person name="Batzoglou S."/>
            <person name="Lee S.-I."/>
            <person name="Bastuerkmen M."/>
            <person name="Spevak C.C."/>
            <person name="Clutterbuck J."/>
            <person name="Kapitonov V."/>
            <person name="Jurka J."/>
            <person name="Scazzocchio C."/>
            <person name="Farman M.L."/>
            <person name="Butler J."/>
            <person name="Purcell S."/>
            <person name="Harris S."/>
            <person name="Braus G.H."/>
            <person name="Draht O."/>
            <person name="Busch S."/>
            <person name="D'Enfert C."/>
            <person name="Bouchier C."/>
            <person name="Goldman G.H."/>
            <person name="Bell-Pedersen D."/>
            <person name="Griffiths-Jones S."/>
            <person name="Doonan J.H."/>
            <person name="Yu J."/>
            <person name="Vienken K."/>
            <person name="Pain A."/>
            <person name="Freitag M."/>
            <person name="Selker E.U."/>
            <person name="Archer D.B."/>
            <person name="Penalva M.A."/>
            <person name="Oakley B.R."/>
            <person name="Momany M."/>
            <person name="Tanaka T."/>
            <person name="Kumagai T."/>
            <person name="Asai K."/>
            <person name="Machida M."/>
            <person name="Nierman W.C."/>
            <person name="Denning D.W."/>
            <person name="Caddick M.X."/>
            <person name="Hynes M."/>
            <person name="Paoletti M."/>
            <person name="Fischer R."/>
            <person name="Miller B.L."/>
            <person name="Dyer P.S."/>
            <person name="Sachs M.S."/>
            <person name="Osmani S.A."/>
            <person name="Birren B.W."/>
        </authorList>
    </citation>
    <scope>NUCLEOTIDE SEQUENCE [LARGE SCALE GENOMIC DNA]</scope>
    <source>
        <strain>FGSC A4 / ATCC 38163 / CBS 112.46 / NRRL 194 / M139</strain>
    </source>
</reference>
<reference key="2">
    <citation type="journal article" date="2009" name="Fungal Genet. Biol.">
        <title>The 2008 update of the Aspergillus nidulans genome annotation: a community effort.</title>
        <authorList>
            <person name="Wortman J.R."/>
            <person name="Gilsenan J.M."/>
            <person name="Joardar V."/>
            <person name="Deegan J."/>
            <person name="Clutterbuck J."/>
            <person name="Andersen M.R."/>
            <person name="Archer D."/>
            <person name="Bencina M."/>
            <person name="Braus G."/>
            <person name="Coutinho P."/>
            <person name="von Dohren H."/>
            <person name="Doonan J."/>
            <person name="Driessen A.J."/>
            <person name="Durek P."/>
            <person name="Espeso E."/>
            <person name="Fekete E."/>
            <person name="Flipphi M."/>
            <person name="Estrada C.G."/>
            <person name="Geysens S."/>
            <person name="Goldman G."/>
            <person name="de Groot P.W."/>
            <person name="Hansen K."/>
            <person name="Harris S.D."/>
            <person name="Heinekamp T."/>
            <person name="Helmstaedt K."/>
            <person name="Henrissat B."/>
            <person name="Hofmann G."/>
            <person name="Homan T."/>
            <person name="Horio T."/>
            <person name="Horiuchi H."/>
            <person name="James S."/>
            <person name="Jones M."/>
            <person name="Karaffa L."/>
            <person name="Karanyi Z."/>
            <person name="Kato M."/>
            <person name="Keller N."/>
            <person name="Kelly D.E."/>
            <person name="Kiel J.A."/>
            <person name="Kim J.M."/>
            <person name="van der Klei I.J."/>
            <person name="Klis F.M."/>
            <person name="Kovalchuk A."/>
            <person name="Krasevec N."/>
            <person name="Kubicek C.P."/>
            <person name="Liu B."/>
            <person name="Maccabe A."/>
            <person name="Meyer V."/>
            <person name="Mirabito P."/>
            <person name="Miskei M."/>
            <person name="Mos M."/>
            <person name="Mullins J."/>
            <person name="Nelson D.R."/>
            <person name="Nielsen J."/>
            <person name="Oakley B.R."/>
            <person name="Osmani S.A."/>
            <person name="Pakula T."/>
            <person name="Paszewski A."/>
            <person name="Paulsen I."/>
            <person name="Pilsyk S."/>
            <person name="Pocsi I."/>
            <person name="Punt P.J."/>
            <person name="Ram A.F."/>
            <person name="Ren Q."/>
            <person name="Robellet X."/>
            <person name="Robson G."/>
            <person name="Seiboth B."/>
            <person name="van Solingen P."/>
            <person name="Specht T."/>
            <person name="Sun J."/>
            <person name="Taheri-Talesh N."/>
            <person name="Takeshita N."/>
            <person name="Ussery D."/>
            <person name="vanKuyk P.A."/>
            <person name="Visser H."/>
            <person name="van de Vondervoort P.J."/>
            <person name="de Vries R.P."/>
            <person name="Walton J."/>
            <person name="Xiang X."/>
            <person name="Xiong Y."/>
            <person name="Zeng A.P."/>
            <person name="Brandt B.W."/>
            <person name="Cornell M.J."/>
            <person name="van den Hondel C.A."/>
            <person name="Visser J."/>
            <person name="Oliver S.G."/>
            <person name="Turner G."/>
        </authorList>
    </citation>
    <scope>GENOME REANNOTATION</scope>
    <source>
        <strain>FGSC A4 / ATCC 38163 / CBS 112.46 / NRRL 194 / M139</strain>
    </source>
</reference>
<reference key="3">
    <citation type="journal article" date="2012" name="ACS Chem. Biol.">
        <title>Signaling the induction of sporulation involves the interaction of two secondary metabolites in Aspergillus nidulans.</title>
        <authorList>
            <person name="Rodriguez-Urra A.B."/>
            <person name="Jimenez C."/>
            <person name="Nieto M.I."/>
            <person name="Rodriguez J."/>
            <person name="Hayashi H."/>
            <person name="Ugalde U."/>
        </authorList>
    </citation>
    <scope>FUNCTION</scope>
</reference>
<reference key="4">
    <citation type="journal article" date="2012" name="J. Am. Chem. Soc.">
        <title>Two separate gene clusters encode the biosynthetic pathway for the meroterpenoids austinol and dehydroaustinol in Aspergillus nidulans.</title>
        <authorList>
            <person name="Lo H.C."/>
            <person name="Entwistle R."/>
            <person name="Guo C.J."/>
            <person name="Ahuja M."/>
            <person name="Szewczyk E."/>
            <person name="Hung J.H."/>
            <person name="Chiang Y.M."/>
            <person name="Oakley B.R."/>
            <person name="Wang C.C."/>
        </authorList>
    </citation>
    <scope>FUNCTION</scope>
    <scope>DISRUPTION PHENOTYPE</scope>
</reference>
<reference key="5">
    <citation type="journal article" date="2013" name="J. Am. Chem. Soc.">
        <title>Spiro-ring formation is catalyzed by a multifunctional dioxygenase in austinol biosynthesis.</title>
        <authorList>
            <person name="Matsuda Y."/>
            <person name="Awakawa T."/>
            <person name="Wakimoto T."/>
            <person name="Abe I."/>
        </authorList>
    </citation>
    <scope>FUNCTION</scope>
    <scope>CATALYTIC ACTIVITY</scope>
</reference>
<reference evidence="10" key="6">
    <citation type="journal article" date="2018" name="Nat. Commun.">
        <title>Structure function and engineering of multifunctional non-heme iron dependent oxygenases in fungal meroterpenoid biosynthesis.</title>
        <authorList>
            <person name="Nakashima Y."/>
            <person name="Mori T."/>
            <person name="Nakamura H."/>
            <person name="Awakawa T."/>
            <person name="Hoshino S."/>
            <person name="Senda M."/>
            <person name="Senda T."/>
            <person name="Abe I."/>
        </authorList>
    </citation>
    <scope>X-RAY CRYSTALLOGRAPHY (2.11 ANGSTROMS) OF 6-298 IN COMPLEX WITH SUBSTRATE</scope>
    <scope>SUBUNIT</scope>
    <scope>COFACTOR</scope>
    <scope>FUNCTION</scope>
    <scope>CATALYTIC ACTIVITY</scope>
    <scope>BIOPHYSICOCHEMICAL PROPERTIES</scope>
    <scope>MUTAGENESIS OF LEU-150 AND SER-232</scope>
    <scope>DOMAIN</scope>
</reference>
<reference key="7">
    <citation type="journal article" date="2017" name="ACS Chem. Biol.">
        <title>Rewiring of the austinoid biosynthetic pathway in filamentous fungi.</title>
        <authorList>
            <person name="Mattern D.J."/>
            <person name="Valiante V."/>
            <person name="Horn F."/>
            <person name="Petzke L."/>
            <person name="Brakhage A.A."/>
        </authorList>
    </citation>
    <scope>FUNCTION</scope>
</reference>
<protein>
    <recommendedName>
        <fullName evidence="7">Multifunctional dioxygenase ausE</fullName>
        <ecNumber evidence="3 5">1.14.11.-</ecNumber>
    </recommendedName>
    <alternativeName>
        <fullName evidence="6">Austinoid biosynthesis clusters protein E</fullName>
    </alternativeName>
</protein>
<gene>
    <name evidence="6" type="primary">ausE</name>
    <name type="ORF">AN9246</name>
</gene>
<keyword id="KW-0002">3D-structure</keyword>
<keyword id="KW-0223">Dioxygenase</keyword>
<keyword id="KW-0408">Iron</keyword>
<keyword id="KW-0479">Metal-binding</keyword>
<keyword id="KW-0560">Oxidoreductase</keyword>
<keyword id="KW-1185">Reference proteome</keyword>
<accession>Q5AR34</accession>
<accession>C8VQ83</accession>
<proteinExistence type="evidence at protein level"/>
<sequence>MGSATPSRLQKFPATAPADEIYAAFKEDGCVIIEGFVPPDQMARFSQEIQPAMEKIQVQVTNDGNSNDRVKRFSKLVTTSPTFRHEILENDLMHELLQRVFSKPGEGMGYHFNDTMVIEVQPGAPAQRLHRDQELYPWWNSMGPDAPECLVNFFCAVTPFTVENGATRLVPGSNRWPELTLINATDCPQYGKIDSVPAIMQPGDCYMMSGKVIHGAGHNATLSDQRRALAFSTIRRELRPVQAFPLWIPMQIATELSPRTQAMFGFRSSTQHCDVDTVHFWGNDGKDIGEHLGLISSA</sequence>
<comment type="function">
    <text evidence="1 2 3 4">Multifunctional dioxygenase; part of the gene cluster B that mediates the biosynthesis of austinol and dehydroaustinol, two fungal meroterpenoids (PubMed:22329759). The first step of the pathway is the synthesis of 3,5-dimethylorsellinic acid by the polyketide synthase ausA (PubMed:22329759). 3,5-dimethylorsellinic acid is then prenylated by the polyprenyl transferase ausN (PubMed:22329759). Further epoxidation by the FAD-dependent monooxygenase ausM and cyclization by the probable terpene cyclase ausL lead to the formation of protoaustinoid A (PubMed:22329759). Protoaustinoid A is then oxidized to spiro-lactone preaustinoid A3 by the combined action of the FAD-binding monooxygenases ausB and ausC, and the dioxygenase ausE (PubMed:22329759, PubMed:23865690). Acid-catalyzed keto-rearrangement and ring contraction of the tetraketide portion of preaustinoid A3 by ausJ lead to the formation of preaustinoid A4 (PubMed:22329759). The aldo-keto reductase ausK, with the help of ausH, is involved in the next step by transforming preaustinoid A4 into isoaustinone which is in turn hydroxylated by the P450 monooxygenase ausI to form austinolide (PubMed:22329759). Finally, the cytochrome P450 monooxygenase ausG modifies austinolide to austinol (PubMed:22329759). Austinol can be further modified to dehydroaustinol which forms a diffusible complex with diorcinol that initiates conidiation (PubMed:22234162, PubMed:22329759). Due to genetic rearrangements of the clusters and the subsequent loss of some enzymes, the end products of the Emericella nidulans austinoid biosynthesis clusters are austinol and dehydroaustinol, even if additional enzymes, such as the O-acetyltransferase ausQ and the cytochrome P450 monooxygenase ausR are still functional (PubMed:29076725).</text>
</comment>
<comment type="catalytic activity">
    <reaction evidence="3 5">
        <text>preaustinoid A1 + 2-oxoglutarate + O2 = preaustinoid A2 + succinate + CO2 + H2O</text>
        <dbReference type="Rhea" id="RHEA:65132"/>
        <dbReference type="ChEBI" id="CHEBI:15377"/>
        <dbReference type="ChEBI" id="CHEBI:15379"/>
        <dbReference type="ChEBI" id="CHEBI:16526"/>
        <dbReference type="ChEBI" id="CHEBI:16810"/>
        <dbReference type="ChEBI" id="CHEBI:30031"/>
        <dbReference type="ChEBI" id="CHEBI:69026"/>
        <dbReference type="ChEBI" id="CHEBI:156343"/>
    </reaction>
    <physiologicalReaction direction="left-to-right" evidence="3 5">
        <dbReference type="Rhea" id="RHEA:65133"/>
    </physiologicalReaction>
</comment>
<comment type="catalytic activity">
    <reaction evidence="3">
        <text>preaustinoid A2 + 2-oxoglutarate + O2 = preaustinoid A3 + succinate + CO2 + H2O</text>
        <dbReference type="Rhea" id="RHEA:65156"/>
        <dbReference type="ChEBI" id="CHEBI:15377"/>
        <dbReference type="ChEBI" id="CHEBI:15379"/>
        <dbReference type="ChEBI" id="CHEBI:16526"/>
        <dbReference type="ChEBI" id="CHEBI:16810"/>
        <dbReference type="ChEBI" id="CHEBI:30031"/>
        <dbReference type="ChEBI" id="CHEBI:156343"/>
        <dbReference type="ChEBI" id="CHEBI:156346"/>
    </reaction>
    <physiologicalReaction direction="left-to-right" evidence="3">
        <dbReference type="Rhea" id="RHEA:65157"/>
    </physiologicalReaction>
</comment>
<comment type="catalytic activity">
    <reaction evidence="3">
        <text>berkeleyone A + 2-oxoglutarate + O2 = preaustinoid A + succinate + CO2 + H2O</text>
        <dbReference type="Rhea" id="RHEA:65144"/>
        <dbReference type="ChEBI" id="CHEBI:15377"/>
        <dbReference type="ChEBI" id="CHEBI:15379"/>
        <dbReference type="ChEBI" id="CHEBI:16526"/>
        <dbReference type="ChEBI" id="CHEBI:16810"/>
        <dbReference type="ChEBI" id="CHEBI:30031"/>
        <dbReference type="ChEBI" id="CHEBI:69023"/>
        <dbReference type="ChEBI" id="CHEBI:69024"/>
    </reaction>
    <physiologicalReaction direction="left-to-right" evidence="3">
        <dbReference type="Rhea" id="RHEA:65145"/>
    </physiologicalReaction>
</comment>
<comment type="cofactor">
    <cofactor evidence="5">
        <name>Fe cation</name>
        <dbReference type="ChEBI" id="CHEBI:24875"/>
    </cofactor>
</comment>
<comment type="biophysicochemical properties">
    <kinetics>
        <KM evidence="5">40.9 uM for preaustinoid A1</KM>
    </kinetics>
</comment>
<comment type="pathway">
    <text evidence="2 5">Secondary metabolite biosynthesis; terpenoid biosynthesis.</text>
</comment>
<comment type="subunit">
    <text evidence="5">Homodimer.</text>
</comment>
<comment type="domain">
    <text evidence="1 5">Residues at positions 150 and 232 are important for the type of reaction catalyzed, using identical substrate (PubMed:29317628). Both ausE and prhA accept preaustinoid A1 as a substrate to form divergent products through dynamic skeletal rearrangement (PubMed:29317628). AusE (containing 'Leu-150' and 'Ser-232') first desaturates at C1-C2 to form preaustinoid A2, followed by rearrangement leading to the formation of the spiro-lactone in preaustinoid A3 (PubMed:29317628). In contrast, prhA (containing 'Val-150' and 'Ala-232') first desaturates at C5-C6 to form berkeleyone B, followed by rearrangement of the A/B-ring to form the cycloheptadiene moiety in berkeleydione (PubMed:22234162).</text>
</comment>
<comment type="disruption phenotype">
    <text evidence="2">Impairs the synthesis of austinol and dehydroaustinol (PubMed:22329759).</text>
</comment>
<comment type="miscellaneous">
    <text evidence="9">In A.calidoustus, the austinoid gene cluster lies on a contiguous DNA region, while clusters from E.nidulans and P.brasilianum are split in their respective genomes. Genetic rearrangements provoked variability among the clusters and E.nidulans produces the least number of austionoid derivatives with the end products austinol and dehydroaustinol, while P.brasilianum can produce until acetoxydehydroaustin, and A.calidoustus produces the highest number of identified derivatives.</text>
</comment>
<comment type="similarity">
    <text evidence="8">Belongs to the PhyH family.</text>
</comment>
<organism>
    <name type="scientific">Emericella nidulans (strain FGSC A4 / ATCC 38163 / CBS 112.46 / NRRL 194 / M139)</name>
    <name type="common">Aspergillus nidulans</name>
    <dbReference type="NCBI Taxonomy" id="227321"/>
    <lineage>
        <taxon>Eukaryota</taxon>
        <taxon>Fungi</taxon>
        <taxon>Dikarya</taxon>
        <taxon>Ascomycota</taxon>
        <taxon>Pezizomycotina</taxon>
        <taxon>Eurotiomycetes</taxon>
        <taxon>Eurotiomycetidae</taxon>
        <taxon>Eurotiales</taxon>
        <taxon>Aspergillaceae</taxon>
        <taxon>Aspergillus</taxon>
        <taxon>Aspergillus subgen. Nidulantes</taxon>
    </lineage>
</organism>
<evidence type="ECO:0000269" key="1">
    <source>
    </source>
</evidence>
<evidence type="ECO:0000269" key="2">
    <source>
    </source>
</evidence>
<evidence type="ECO:0000269" key="3">
    <source>
    </source>
</evidence>
<evidence type="ECO:0000269" key="4">
    <source>
    </source>
</evidence>
<evidence type="ECO:0000269" key="5">
    <source>
    </source>
</evidence>
<evidence type="ECO:0000303" key="6">
    <source>
    </source>
</evidence>
<evidence type="ECO:0000303" key="7">
    <source>
    </source>
</evidence>
<evidence type="ECO:0000305" key="8"/>
<evidence type="ECO:0000305" key="9">
    <source>
    </source>
</evidence>
<evidence type="ECO:0007744" key="10">
    <source>
        <dbReference type="PDB" id="5YBL"/>
    </source>
</evidence>
<evidence type="ECO:0007829" key="11">
    <source>
        <dbReference type="PDB" id="5YBL"/>
    </source>
</evidence>